<keyword id="KW-0028">Amino-acid biosynthesis</keyword>
<keyword id="KW-0963">Cytoplasm</keyword>
<keyword id="KW-0368">Histidine biosynthesis</keyword>
<keyword id="KW-0413">Isomerase</keyword>
<protein>
    <recommendedName>
        <fullName evidence="1">1-(5-phosphoribosyl)-5-[(5-phosphoribosylamino)methylideneamino] imidazole-4-carboxamide isomerase</fullName>
        <ecNumber evidence="1">5.3.1.16</ecNumber>
    </recommendedName>
    <alternativeName>
        <fullName evidence="1">Phosphoribosylformimino-5-aminoimidazole carboxamide ribotide isomerase</fullName>
    </alternativeName>
</protein>
<reference key="1">
    <citation type="submission" date="2008-06" db="EMBL/GenBank/DDBJ databases">
        <title>Complete sequence of Chlorobaculum parvum NCIB 8327.</title>
        <authorList>
            <consortium name="US DOE Joint Genome Institute"/>
            <person name="Lucas S."/>
            <person name="Copeland A."/>
            <person name="Lapidus A."/>
            <person name="Glavina del Rio T."/>
            <person name="Dalin E."/>
            <person name="Tice H."/>
            <person name="Bruce D."/>
            <person name="Goodwin L."/>
            <person name="Pitluck S."/>
            <person name="Schmutz J."/>
            <person name="Larimer F."/>
            <person name="Land M."/>
            <person name="Hauser L."/>
            <person name="Kyrpides N."/>
            <person name="Mikhailova N."/>
            <person name="Zhao F."/>
            <person name="Li T."/>
            <person name="Liu Z."/>
            <person name="Overmann J."/>
            <person name="Bryant D.A."/>
            <person name="Richardson P."/>
        </authorList>
    </citation>
    <scope>NUCLEOTIDE SEQUENCE [LARGE SCALE GENOMIC DNA]</scope>
    <source>
        <strain>DSM 263 / NCIMB 8327</strain>
    </source>
</reference>
<comment type="catalytic activity">
    <reaction evidence="1">
        <text>1-(5-phospho-beta-D-ribosyl)-5-[(5-phospho-beta-D-ribosylamino)methylideneamino]imidazole-4-carboxamide = 5-[(5-phospho-1-deoxy-D-ribulos-1-ylimino)methylamino]-1-(5-phospho-beta-D-ribosyl)imidazole-4-carboxamide</text>
        <dbReference type="Rhea" id="RHEA:15469"/>
        <dbReference type="ChEBI" id="CHEBI:58435"/>
        <dbReference type="ChEBI" id="CHEBI:58525"/>
        <dbReference type="EC" id="5.3.1.16"/>
    </reaction>
</comment>
<comment type="pathway">
    <text evidence="1">Amino-acid biosynthesis; L-histidine biosynthesis; L-histidine from 5-phospho-alpha-D-ribose 1-diphosphate: step 4/9.</text>
</comment>
<comment type="subcellular location">
    <subcellularLocation>
        <location evidence="1">Cytoplasm</location>
    </subcellularLocation>
</comment>
<comment type="similarity">
    <text evidence="1">Belongs to the HisA/HisF family.</text>
</comment>
<organism>
    <name type="scientific">Chlorobaculum parvum (strain DSM 263 / NCIMB 8327)</name>
    <name type="common">Chlorobium vibrioforme subsp. thiosulfatophilum</name>
    <dbReference type="NCBI Taxonomy" id="517417"/>
    <lineage>
        <taxon>Bacteria</taxon>
        <taxon>Pseudomonadati</taxon>
        <taxon>Chlorobiota</taxon>
        <taxon>Chlorobiia</taxon>
        <taxon>Chlorobiales</taxon>
        <taxon>Chlorobiaceae</taxon>
        <taxon>Chlorobaculum</taxon>
    </lineage>
</organism>
<dbReference type="EC" id="5.3.1.16" evidence="1"/>
<dbReference type="EMBL" id="CP001099">
    <property type="protein sequence ID" value="ACF10893.1"/>
    <property type="molecule type" value="Genomic_DNA"/>
</dbReference>
<dbReference type="RefSeq" id="WP_012501726.1">
    <property type="nucleotide sequence ID" value="NC_011027.1"/>
</dbReference>
<dbReference type="SMR" id="B3QLK3"/>
<dbReference type="STRING" id="517417.Cpar_0471"/>
<dbReference type="KEGG" id="cpc:Cpar_0471"/>
<dbReference type="eggNOG" id="COG0106">
    <property type="taxonomic scope" value="Bacteria"/>
</dbReference>
<dbReference type="HOGENOM" id="CLU_048577_1_1_10"/>
<dbReference type="OrthoDB" id="9807749at2"/>
<dbReference type="UniPathway" id="UPA00031">
    <property type="reaction ID" value="UER00009"/>
</dbReference>
<dbReference type="Proteomes" id="UP000008811">
    <property type="component" value="Chromosome"/>
</dbReference>
<dbReference type="GO" id="GO:0005737">
    <property type="term" value="C:cytoplasm"/>
    <property type="evidence" value="ECO:0007669"/>
    <property type="project" value="UniProtKB-SubCell"/>
</dbReference>
<dbReference type="GO" id="GO:0003949">
    <property type="term" value="F:1-(5-phosphoribosyl)-5-[(5-phosphoribosylamino)methylideneamino]imidazole-4-carboxamide isomerase activity"/>
    <property type="evidence" value="ECO:0007669"/>
    <property type="project" value="UniProtKB-UniRule"/>
</dbReference>
<dbReference type="GO" id="GO:0000105">
    <property type="term" value="P:L-histidine biosynthetic process"/>
    <property type="evidence" value="ECO:0007669"/>
    <property type="project" value="UniProtKB-UniRule"/>
</dbReference>
<dbReference type="GO" id="GO:0000162">
    <property type="term" value="P:L-tryptophan biosynthetic process"/>
    <property type="evidence" value="ECO:0007669"/>
    <property type="project" value="TreeGrafter"/>
</dbReference>
<dbReference type="CDD" id="cd04732">
    <property type="entry name" value="HisA"/>
    <property type="match status" value="1"/>
</dbReference>
<dbReference type="FunFam" id="3.20.20.70:FF:000009">
    <property type="entry name" value="1-(5-phosphoribosyl)-5-[(5-phosphoribosylamino)methylideneamino] imidazole-4-carboxamide isomerase"/>
    <property type="match status" value="1"/>
</dbReference>
<dbReference type="Gene3D" id="3.20.20.70">
    <property type="entry name" value="Aldolase class I"/>
    <property type="match status" value="1"/>
</dbReference>
<dbReference type="HAMAP" id="MF_01014">
    <property type="entry name" value="HisA"/>
    <property type="match status" value="1"/>
</dbReference>
<dbReference type="InterPro" id="IPR013785">
    <property type="entry name" value="Aldolase_TIM"/>
</dbReference>
<dbReference type="InterPro" id="IPR006062">
    <property type="entry name" value="His_biosynth"/>
</dbReference>
<dbReference type="InterPro" id="IPR006063">
    <property type="entry name" value="HisA_bact_arch"/>
</dbReference>
<dbReference type="InterPro" id="IPR044524">
    <property type="entry name" value="Isoase_HisA-like"/>
</dbReference>
<dbReference type="InterPro" id="IPR023016">
    <property type="entry name" value="Isoase_HisA-like_bact"/>
</dbReference>
<dbReference type="InterPro" id="IPR011060">
    <property type="entry name" value="RibuloseP-bd_barrel"/>
</dbReference>
<dbReference type="NCBIfam" id="TIGR00007">
    <property type="entry name" value="1-(5-phosphoribosyl)-5-[(5-phosphoribosylamino)methylideneamino]imidazole-4-carboxamide isomerase"/>
    <property type="match status" value="1"/>
</dbReference>
<dbReference type="PANTHER" id="PTHR43090">
    <property type="entry name" value="1-(5-PHOSPHORIBOSYL)-5-[(5-PHOSPHORIBOSYLAMINO)METHYLIDENEAMINO] IMIDAZOLE-4-CARBOXAMIDE ISOMERASE"/>
    <property type="match status" value="1"/>
</dbReference>
<dbReference type="PANTHER" id="PTHR43090:SF2">
    <property type="entry name" value="1-(5-PHOSPHORIBOSYL)-5-[(5-PHOSPHORIBOSYLAMINO)METHYLIDENEAMINO] IMIDAZOLE-4-CARBOXAMIDE ISOMERASE"/>
    <property type="match status" value="1"/>
</dbReference>
<dbReference type="Pfam" id="PF00977">
    <property type="entry name" value="His_biosynth"/>
    <property type="match status" value="1"/>
</dbReference>
<dbReference type="SUPFAM" id="SSF51366">
    <property type="entry name" value="Ribulose-phoshate binding barrel"/>
    <property type="match status" value="1"/>
</dbReference>
<evidence type="ECO:0000255" key="1">
    <source>
        <dbReference type="HAMAP-Rule" id="MF_01014"/>
    </source>
</evidence>
<feature type="chain" id="PRO_1000135093" description="1-(5-phosphoribosyl)-5-[(5-phosphoribosylamino)methylideneamino] imidazole-4-carboxamide isomerase">
    <location>
        <begin position="1"/>
        <end position="260"/>
    </location>
</feature>
<feature type="active site" description="Proton acceptor" evidence="1">
    <location>
        <position position="8"/>
    </location>
</feature>
<feature type="active site" description="Proton donor" evidence="1">
    <location>
        <position position="130"/>
    </location>
</feature>
<name>HIS4_CHLP8</name>
<sequence>MLIIPAIDIKEGKCVRLTRGDFAQKKIYLDNPADMAIIWRKQNAKMLHVVDLDAALTGEMVNFEKIREIVELLDIPIQVGGGIRSVEAVEKYLSIGVSRVVIGSAAVTNPSLVADLLKKYRPSQIVVGIDAEHGVPKIKGWTESSNMQDYELALEMKKLGVERIIYTDITRDGMLQGVGYETTKRFAEKAGMKITASGGVSTSDDLHKLRSLERFGVDSVIIGKALYECNFPCQELWYAYEQDLGIDGEFSTARKKECCR</sequence>
<proteinExistence type="inferred from homology"/>
<accession>B3QLK3</accession>
<gene>
    <name evidence="1" type="primary">hisA</name>
    <name type="ordered locus">Cpar_0471</name>
</gene>